<name>COBQ_PROM5</name>
<protein>
    <recommendedName>
        <fullName evidence="1">Cobyric acid synthase</fullName>
    </recommendedName>
</protein>
<evidence type="ECO:0000255" key="1">
    <source>
        <dbReference type="HAMAP-Rule" id="MF_00028"/>
    </source>
</evidence>
<sequence length="510" mass="57763">MEFTENYNPKNKPIMVLGTSSGAGKSLTVTAICRILKKLGEEPIPFKGQNMSNNAWVDSNGGEMAYSQALQAFSCGINPSSEMNPILLKPQGDSTSEVIHLGKSVGISTAKDYYKDWFMPGWEVIKKSINIIYEKNKNCRLIIEGAGSPVEMNLIHRDLTNLRVAKYLDASCILVTDIERGGVFAQIIGTLELMKPEERKLIKGILINRFRGDLSLFKEGKKWIEDKTKIPVLGIIPWLNDKFPPEDSLDLLERKSYLSNPEIKVGIIKLPSISNFSDFDPLENENSILIEWISEAQNLNQFDFIIIPGSKQTIKDQLFLNESGLSKEIKNYSHNNGNIFGICGGLQMLGTVLEDPFFKEGSNFNSDQSIKGIGLLPLKTTFLKHKITRQIHSESIWPNSTKIIGFEIHNGITKLDSSHLDTLKTNHIFKDFDLGWYKENREGGTIAGTYIHGIFENDEWRDHYINLIRKTKNKLTLDKKSRSYKMKRESIINNLANEFNNHFNISLLLN</sequence>
<keyword id="KW-0169">Cobalamin biosynthesis</keyword>
<keyword id="KW-0315">Glutamine amidotransferase</keyword>
<organism>
    <name type="scientific">Prochlorococcus marinus (strain MIT 9515)</name>
    <dbReference type="NCBI Taxonomy" id="167542"/>
    <lineage>
        <taxon>Bacteria</taxon>
        <taxon>Bacillati</taxon>
        <taxon>Cyanobacteriota</taxon>
        <taxon>Cyanophyceae</taxon>
        <taxon>Synechococcales</taxon>
        <taxon>Prochlorococcaceae</taxon>
        <taxon>Prochlorococcus</taxon>
    </lineage>
</organism>
<reference key="1">
    <citation type="journal article" date="2007" name="PLoS Genet.">
        <title>Patterns and implications of gene gain and loss in the evolution of Prochlorococcus.</title>
        <authorList>
            <person name="Kettler G.C."/>
            <person name="Martiny A.C."/>
            <person name="Huang K."/>
            <person name="Zucker J."/>
            <person name="Coleman M.L."/>
            <person name="Rodrigue S."/>
            <person name="Chen F."/>
            <person name="Lapidus A."/>
            <person name="Ferriera S."/>
            <person name="Johnson J."/>
            <person name="Steglich C."/>
            <person name="Church G.M."/>
            <person name="Richardson P."/>
            <person name="Chisholm S.W."/>
        </authorList>
    </citation>
    <scope>NUCLEOTIDE SEQUENCE [LARGE SCALE GENOMIC DNA]</scope>
    <source>
        <strain>MIT 9515</strain>
    </source>
</reference>
<dbReference type="EMBL" id="CP000552">
    <property type="protein sequence ID" value="ABM72534.1"/>
    <property type="molecule type" value="Genomic_DNA"/>
</dbReference>
<dbReference type="RefSeq" id="WP_011820631.1">
    <property type="nucleotide sequence ID" value="NC_008817.1"/>
</dbReference>
<dbReference type="SMR" id="A2BXM3"/>
<dbReference type="STRING" id="167542.P9515_13271"/>
<dbReference type="GeneID" id="60200611"/>
<dbReference type="KEGG" id="pmc:P9515_13271"/>
<dbReference type="eggNOG" id="COG1492">
    <property type="taxonomic scope" value="Bacteria"/>
</dbReference>
<dbReference type="HOGENOM" id="CLU_019250_2_2_3"/>
<dbReference type="OrthoDB" id="9808302at2"/>
<dbReference type="UniPathway" id="UPA00148"/>
<dbReference type="Proteomes" id="UP000001589">
    <property type="component" value="Chromosome"/>
</dbReference>
<dbReference type="GO" id="GO:0015420">
    <property type="term" value="F:ABC-type vitamin B12 transporter activity"/>
    <property type="evidence" value="ECO:0007669"/>
    <property type="project" value="UniProtKB-UniRule"/>
</dbReference>
<dbReference type="GO" id="GO:0003824">
    <property type="term" value="F:catalytic activity"/>
    <property type="evidence" value="ECO:0007669"/>
    <property type="project" value="InterPro"/>
</dbReference>
<dbReference type="GO" id="GO:0009236">
    <property type="term" value="P:cobalamin biosynthetic process"/>
    <property type="evidence" value="ECO:0007669"/>
    <property type="project" value="UniProtKB-UniRule"/>
</dbReference>
<dbReference type="CDD" id="cd05389">
    <property type="entry name" value="CobQ_N"/>
    <property type="match status" value="1"/>
</dbReference>
<dbReference type="CDD" id="cd01750">
    <property type="entry name" value="GATase1_CobQ"/>
    <property type="match status" value="1"/>
</dbReference>
<dbReference type="Gene3D" id="3.40.50.880">
    <property type="match status" value="1"/>
</dbReference>
<dbReference type="Gene3D" id="3.40.50.300">
    <property type="entry name" value="P-loop containing nucleotide triphosphate hydrolases"/>
    <property type="match status" value="1"/>
</dbReference>
<dbReference type="HAMAP" id="MF_00028">
    <property type="entry name" value="CobQ"/>
    <property type="match status" value="1"/>
</dbReference>
<dbReference type="InterPro" id="IPR029062">
    <property type="entry name" value="Class_I_gatase-like"/>
</dbReference>
<dbReference type="InterPro" id="IPR002586">
    <property type="entry name" value="CobQ/CobB/MinD/ParA_Nub-bd_dom"/>
</dbReference>
<dbReference type="InterPro" id="IPR033949">
    <property type="entry name" value="CobQ_GATase1"/>
</dbReference>
<dbReference type="InterPro" id="IPR047045">
    <property type="entry name" value="CobQ_N"/>
</dbReference>
<dbReference type="InterPro" id="IPR004459">
    <property type="entry name" value="CobQ_synth"/>
</dbReference>
<dbReference type="InterPro" id="IPR011698">
    <property type="entry name" value="GATase_3"/>
</dbReference>
<dbReference type="InterPro" id="IPR027417">
    <property type="entry name" value="P-loop_NTPase"/>
</dbReference>
<dbReference type="NCBIfam" id="TIGR00313">
    <property type="entry name" value="cobQ"/>
    <property type="match status" value="1"/>
</dbReference>
<dbReference type="NCBIfam" id="NF001989">
    <property type="entry name" value="PRK00784.1"/>
    <property type="match status" value="1"/>
</dbReference>
<dbReference type="PANTHER" id="PTHR21343:SF1">
    <property type="entry name" value="COBYRIC ACID SYNTHASE"/>
    <property type="match status" value="1"/>
</dbReference>
<dbReference type="PANTHER" id="PTHR21343">
    <property type="entry name" value="DETHIOBIOTIN SYNTHETASE"/>
    <property type="match status" value="1"/>
</dbReference>
<dbReference type="Pfam" id="PF01656">
    <property type="entry name" value="CbiA"/>
    <property type="match status" value="1"/>
</dbReference>
<dbReference type="Pfam" id="PF07685">
    <property type="entry name" value="GATase_3"/>
    <property type="match status" value="1"/>
</dbReference>
<dbReference type="SUPFAM" id="SSF52317">
    <property type="entry name" value="Class I glutamine amidotransferase-like"/>
    <property type="match status" value="1"/>
</dbReference>
<dbReference type="SUPFAM" id="SSF52540">
    <property type="entry name" value="P-loop containing nucleoside triphosphate hydrolases"/>
    <property type="match status" value="1"/>
</dbReference>
<dbReference type="PROSITE" id="PS51274">
    <property type="entry name" value="GATASE_COBBQ"/>
    <property type="match status" value="1"/>
</dbReference>
<gene>
    <name evidence="1" type="primary">cobQ</name>
    <name type="ordered locus">P9515_13271</name>
</gene>
<accession>A2BXM3</accession>
<feature type="chain" id="PRO_1000002371" description="Cobyric acid synthase">
    <location>
        <begin position="1"/>
        <end position="510"/>
    </location>
</feature>
<feature type="domain" description="GATase cobBQ-type" evidence="1">
    <location>
        <begin position="262"/>
        <end position="460"/>
    </location>
</feature>
<feature type="active site" description="Nucleophile" evidence="1">
    <location>
        <position position="343"/>
    </location>
</feature>
<feature type="active site" evidence="1">
    <location>
        <position position="452"/>
    </location>
</feature>
<comment type="function">
    <text evidence="1">Catalyzes amidations at positions B, D, E, and G on adenosylcobyrinic A,C-diamide. NH(2) groups are provided by glutamine, and one molecule of ATP is hydrogenolyzed for each amidation.</text>
</comment>
<comment type="pathway">
    <text evidence="1">Cofactor biosynthesis; adenosylcobalamin biosynthesis.</text>
</comment>
<comment type="similarity">
    <text evidence="1">Belongs to the CobB/CobQ family. CobQ subfamily.</text>
</comment>
<proteinExistence type="inferred from homology"/>